<name>LRK42_ARATH</name>
<dbReference type="EC" id="2.7.11.1" evidence="3"/>
<dbReference type="EMBL" id="AL132960">
    <property type="protein sequence ID" value="CAB88343.1"/>
    <property type="molecule type" value="Genomic_DNA"/>
</dbReference>
<dbReference type="EMBL" id="CP002686">
    <property type="protein sequence ID" value="AEE79146.1"/>
    <property type="molecule type" value="Genomic_DNA"/>
</dbReference>
<dbReference type="EMBL" id="BT004634">
    <property type="protein sequence ID" value="AAO42880.1"/>
    <property type="molecule type" value="mRNA"/>
</dbReference>
<dbReference type="EMBL" id="AK227502">
    <property type="protein sequence ID" value="BAE99502.1"/>
    <property type="molecule type" value="mRNA"/>
</dbReference>
<dbReference type="PIR" id="T45921">
    <property type="entry name" value="T45921"/>
</dbReference>
<dbReference type="RefSeq" id="NP_190949.1">
    <property type="nucleotide sequence ID" value="NM_115241.3"/>
</dbReference>
<dbReference type="SMR" id="Q9M345"/>
<dbReference type="BioGRID" id="9865">
    <property type="interactions" value="24"/>
</dbReference>
<dbReference type="FunCoup" id="Q9M345">
    <property type="interactions" value="296"/>
</dbReference>
<dbReference type="IntAct" id="Q9M345">
    <property type="interactions" value="23"/>
</dbReference>
<dbReference type="STRING" id="3702.Q9M345"/>
<dbReference type="GlyCosmos" id="Q9M345">
    <property type="glycosylation" value="8 sites, No reported glycans"/>
</dbReference>
<dbReference type="GlyGen" id="Q9M345">
    <property type="glycosylation" value="8 sites"/>
</dbReference>
<dbReference type="PaxDb" id="3702-AT3G53810.1"/>
<dbReference type="ProteomicsDB" id="238395"/>
<dbReference type="EnsemblPlants" id="AT3G53810.1">
    <property type="protein sequence ID" value="AT3G53810.1"/>
    <property type="gene ID" value="AT3G53810"/>
</dbReference>
<dbReference type="GeneID" id="824548"/>
<dbReference type="Gramene" id="AT3G53810.1">
    <property type="protein sequence ID" value="AT3G53810.1"/>
    <property type="gene ID" value="AT3G53810"/>
</dbReference>
<dbReference type="KEGG" id="ath:AT3G53810"/>
<dbReference type="Araport" id="AT3G53810"/>
<dbReference type="TAIR" id="AT3G53810">
    <property type="gene designation" value="LECRK-IV.2"/>
</dbReference>
<dbReference type="eggNOG" id="ENOG502QSJ4">
    <property type="taxonomic scope" value="Eukaryota"/>
</dbReference>
<dbReference type="HOGENOM" id="CLU_000288_62_3_1"/>
<dbReference type="InParanoid" id="Q9M345"/>
<dbReference type="OMA" id="SWFVWRP"/>
<dbReference type="PhylomeDB" id="Q9M345"/>
<dbReference type="PRO" id="PR:Q9M345"/>
<dbReference type="Proteomes" id="UP000006548">
    <property type="component" value="Chromosome 3"/>
</dbReference>
<dbReference type="ExpressionAtlas" id="Q9M345">
    <property type="expression patterns" value="baseline and differential"/>
</dbReference>
<dbReference type="GO" id="GO:0005829">
    <property type="term" value="C:cytosol"/>
    <property type="evidence" value="ECO:0007005"/>
    <property type="project" value="TAIR"/>
</dbReference>
<dbReference type="GO" id="GO:0005886">
    <property type="term" value="C:plasma membrane"/>
    <property type="evidence" value="ECO:0000250"/>
    <property type="project" value="UniProtKB"/>
</dbReference>
<dbReference type="GO" id="GO:0005524">
    <property type="term" value="F:ATP binding"/>
    <property type="evidence" value="ECO:0007669"/>
    <property type="project" value="UniProtKB-KW"/>
</dbReference>
<dbReference type="GO" id="GO:0030246">
    <property type="term" value="F:carbohydrate binding"/>
    <property type="evidence" value="ECO:0007669"/>
    <property type="project" value="UniProtKB-KW"/>
</dbReference>
<dbReference type="GO" id="GO:0106310">
    <property type="term" value="F:protein serine kinase activity"/>
    <property type="evidence" value="ECO:0007669"/>
    <property type="project" value="RHEA"/>
</dbReference>
<dbReference type="GO" id="GO:0004674">
    <property type="term" value="F:protein serine/threonine kinase activity"/>
    <property type="evidence" value="ECO:0007669"/>
    <property type="project" value="UniProtKB-KW"/>
</dbReference>
<dbReference type="GO" id="GO:0042742">
    <property type="term" value="P:defense response to bacterium"/>
    <property type="evidence" value="ECO:0000315"/>
    <property type="project" value="UniProtKB"/>
</dbReference>
<dbReference type="GO" id="GO:0009555">
    <property type="term" value="P:pollen development"/>
    <property type="evidence" value="ECO:0000315"/>
    <property type="project" value="UniProtKB"/>
</dbReference>
<dbReference type="CDD" id="cd06899">
    <property type="entry name" value="lectin_legume_LecRK_Arcelin_ConA"/>
    <property type="match status" value="1"/>
</dbReference>
<dbReference type="CDD" id="cd14066">
    <property type="entry name" value="STKc_IRAK"/>
    <property type="match status" value="1"/>
</dbReference>
<dbReference type="FunFam" id="3.30.200.20:FF:000623">
    <property type="entry name" value="L-type lectin-domain containing receptor kinase IV.1"/>
    <property type="match status" value="1"/>
</dbReference>
<dbReference type="FunFam" id="1.10.510.10:FF:000108">
    <property type="entry name" value="L-type lectin-domain containing receptor kinase S.4"/>
    <property type="match status" value="1"/>
</dbReference>
<dbReference type="FunFam" id="2.60.120.200:FF:000051">
    <property type="entry name" value="L-type lectin-domain containing receptor kinase V.9"/>
    <property type="match status" value="1"/>
</dbReference>
<dbReference type="Gene3D" id="2.60.120.200">
    <property type="match status" value="1"/>
</dbReference>
<dbReference type="Gene3D" id="3.30.200.20">
    <property type="entry name" value="Phosphorylase Kinase, domain 1"/>
    <property type="match status" value="1"/>
</dbReference>
<dbReference type="Gene3D" id="1.10.510.10">
    <property type="entry name" value="Transferase(Phosphotransferase) domain 1"/>
    <property type="match status" value="1"/>
</dbReference>
<dbReference type="InterPro" id="IPR013320">
    <property type="entry name" value="ConA-like_dom_sf"/>
</dbReference>
<dbReference type="InterPro" id="IPR011009">
    <property type="entry name" value="Kinase-like_dom_sf"/>
</dbReference>
<dbReference type="InterPro" id="IPR050528">
    <property type="entry name" value="L-type_Lectin-RKs"/>
</dbReference>
<dbReference type="InterPro" id="IPR001220">
    <property type="entry name" value="Legume_lectin_dom"/>
</dbReference>
<dbReference type="InterPro" id="IPR000719">
    <property type="entry name" value="Prot_kinase_dom"/>
</dbReference>
<dbReference type="InterPro" id="IPR017441">
    <property type="entry name" value="Protein_kinase_ATP_BS"/>
</dbReference>
<dbReference type="InterPro" id="IPR008271">
    <property type="entry name" value="Ser/Thr_kinase_AS"/>
</dbReference>
<dbReference type="PANTHER" id="PTHR27007">
    <property type="match status" value="1"/>
</dbReference>
<dbReference type="Pfam" id="PF00139">
    <property type="entry name" value="Lectin_legB"/>
    <property type="match status" value="1"/>
</dbReference>
<dbReference type="Pfam" id="PF00069">
    <property type="entry name" value="Pkinase"/>
    <property type="match status" value="1"/>
</dbReference>
<dbReference type="SMART" id="SM00220">
    <property type="entry name" value="S_TKc"/>
    <property type="match status" value="1"/>
</dbReference>
<dbReference type="SUPFAM" id="SSF49899">
    <property type="entry name" value="Concanavalin A-like lectins/glucanases"/>
    <property type="match status" value="1"/>
</dbReference>
<dbReference type="SUPFAM" id="SSF56112">
    <property type="entry name" value="Protein kinase-like (PK-like)"/>
    <property type="match status" value="1"/>
</dbReference>
<dbReference type="PROSITE" id="PS00107">
    <property type="entry name" value="PROTEIN_KINASE_ATP"/>
    <property type="match status" value="1"/>
</dbReference>
<dbReference type="PROSITE" id="PS50011">
    <property type="entry name" value="PROTEIN_KINASE_DOM"/>
    <property type="match status" value="1"/>
</dbReference>
<dbReference type="PROSITE" id="PS00108">
    <property type="entry name" value="PROTEIN_KINASE_ST"/>
    <property type="match status" value="1"/>
</dbReference>
<comment type="function">
    <text evidence="4">Required during pollen development.</text>
</comment>
<comment type="function">
    <text evidence="5">Involved in resistance response to the pathogenic bacteria Pseudomonas syringae.</text>
</comment>
<comment type="catalytic activity">
    <reaction evidence="3">
        <text>L-seryl-[protein] + ATP = O-phospho-L-seryl-[protein] + ADP + H(+)</text>
        <dbReference type="Rhea" id="RHEA:17989"/>
        <dbReference type="Rhea" id="RHEA-COMP:9863"/>
        <dbReference type="Rhea" id="RHEA-COMP:11604"/>
        <dbReference type="ChEBI" id="CHEBI:15378"/>
        <dbReference type="ChEBI" id="CHEBI:29999"/>
        <dbReference type="ChEBI" id="CHEBI:30616"/>
        <dbReference type="ChEBI" id="CHEBI:83421"/>
        <dbReference type="ChEBI" id="CHEBI:456216"/>
        <dbReference type="EC" id="2.7.11.1"/>
    </reaction>
</comment>
<comment type="catalytic activity">
    <reaction evidence="3">
        <text>L-threonyl-[protein] + ATP = O-phospho-L-threonyl-[protein] + ADP + H(+)</text>
        <dbReference type="Rhea" id="RHEA:46608"/>
        <dbReference type="Rhea" id="RHEA-COMP:11060"/>
        <dbReference type="Rhea" id="RHEA-COMP:11605"/>
        <dbReference type="ChEBI" id="CHEBI:15378"/>
        <dbReference type="ChEBI" id="CHEBI:30013"/>
        <dbReference type="ChEBI" id="CHEBI:30616"/>
        <dbReference type="ChEBI" id="CHEBI:61977"/>
        <dbReference type="ChEBI" id="CHEBI:456216"/>
        <dbReference type="EC" id="2.7.11.1"/>
    </reaction>
</comment>
<comment type="subcellular location">
    <subcellularLocation>
        <location evidence="1">Cell membrane</location>
        <topology evidence="2">Single-pass type I membrane protein</topology>
    </subcellularLocation>
</comment>
<comment type="developmental stage">
    <text evidence="4">Low expression in young flowers (roughly before anther stage 6). Maximum levels around stages 6?7 that fade out gradually to a very low level in young siliques. Never detected in microspores or pollen.</text>
</comment>
<comment type="disruption phenotype">
    <text evidence="4 5">Male sterility due to defects in pollen development leading to deformed and collapsed nonviable pollen grains (PubMed:18392777). Increased susceptibility to the bacteria Pseudomonas syringae, characterized by stronger necrotic symptoms (PubMed:25083911).</text>
</comment>
<comment type="similarity">
    <text evidence="9">In the C-terminal section; belongs to the protein kinase superfamily. Ser/Thr protein kinase family.</text>
</comment>
<comment type="similarity">
    <text evidence="9">In the N-terminal section; belongs to the leguminous lectin family.</text>
</comment>
<sequence>MFVKLKLIFFFFLLCQIMISSSQNLNFTYNGFHPPLTDISLQGLATVTPNGLLKLTNTSVQKTGHAFCTERIRFKDSQNGNVSSFSTTFVFAIHSQIPTLSGHGIAFVVAPTLGLPFALPSQYIGLFNISNNGNDTNHIFAVEFDTIQSSEFGDPNDNHVGIDLNGLRSANYSTAGYRDDHDKFQNLSLISRKRIQVWIDYDNRSHRIDVTVAPFDSDKPRKPLVSYVRDLSSILLEDMYVGFSSATGSVLSEHFLVGWSFRLNGEAPMLSLSKLPKLPRFEPRRISEFYKIGMPLISLSLIFSIIFLAFYIVRRKKKYEEELDDWETEFGKNRFRFKELYHATKGFKEKDLLGSGGFGRVYRGILPTTKLEVAVKRVSHDSKQGMKEFVAEIVSIGRMSHRNLVPLLGYCRRRGELLLVYDYMPNGSLDKYLYNNPETTLDWKQRSTIIKGVASGLFYLHEEWEQVVIHRDVKASNVLLDADFNGRLGDFGLARLYDHGSDPQTTHVVGTLGYLAPEHSRTGRATTTTDVYAFGAFLLEVVSGRRPIEFHSASDDTFLLVEWVFSLWLRGNIMEAKDPKLGSSGYDLEEVEMVLKLGLLCSHSDPRARPSMRQVLQYLRGDMALPELTPLDLSAGSVMNLGGRDGFSGIAMTDFSTVFKGFTGGSSIADSLLSGGR</sequence>
<accession>Q9M345</accession>
<accession>Q84VX6</accession>
<feature type="signal peptide" evidence="2">
    <location>
        <begin position="1"/>
        <end position="22"/>
    </location>
</feature>
<feature type="chain" id="PRO_0000403086" description="L-type lectin-domain containing receptor kinase IV.2">
    <location>
        <begin position="23"/>
        <end position="677"/>
    </location>
</feature>
<feature type="topological domain" description="Extracellular" evidence="2">
    <location>
        <begin position="23"/>
        <end position="291"/>
    </location>
</feature>
<feature type="transmembrane region" description="Helical" evidence="2">
    <location>
        <begin position="292"/>
        <end position="312"/>
    </location>
</feature>
<feature type="topological domain" description="Cytoplasmic" evidence="2">
    <location>
        <begin position="313"/>
        <end position="677"/>
    </location>
</feature>
<feature type="domain" description="Protein kinase" evidence="3">
    <location>
        <begin position="347"/>
        <end position="625"/>
    </location>
</feature>
<feature type="region of interest" description="Legume-lectin like" evidence="2">
    <location>
        <begin position="24"/>
        <end position="262"/>
    </location>
</feature>
<feature type="active site" description="Proton acceptor" evidence="3">
    <location>
        <position position="472"/>
    </location>
</feature>
<feature type="binding site" evidence="3">
    <location>
        <begin position="353"/>
        <end position="361"/>
    </location>
    <ligand>
        <name>ATP</name>
        <dbReference type="ChEBI" id="CHEBI:30616"/>
    </ligand>
</feature>
<feature type="binding site" evidence="3">
    <location>
        <position position="376"/>
    </location>
    <ligand>
        <name>ATP</name>
        <dbReference type="ChEBI" id="CHEBI:30616"/>
    </ligand>
</feature>
<feature type="glycosylation site" description="N-linked (GlcNAc...) asparagine" evidence="2">
    <location>
        <position position="26"/>
    </location>
</feature>
<feature type="glycosylation site" description="N-linked (GlcNAc...) asparagine" evidence="2">
    <location>
        <position position="57"/>
    </location>
</feature>
<feature type="glycosylation site" description="N-linked (GlcNAc...) asparagine" evidence="2">
    <location>
        <position position="81"/>
    </location>
</feature>
<feature type="glycosylation site" description="N-linked (GlcNAc...) asparagine" evidence="2">
    <location>
        <position position="128"/>
    </location>
</feature>
<feature type="glycosylation site" description="N-linked (GlcNAc...) asparagine" evidence="2">
    <location>
        <position position="134"/>
    </location>
</feature>
<feature type="glycosylation site" description="N-linked (GlcNAc...) asparagine" evidence="2">
    <location>
        <position position="171"/>
    </location>
</feature>
<feature type="glycosylation site" description="N-linked (GlcNAc...) asparagine" evidence="2">
    <location>
        <position position="186"/>
    </location>
</feature>
<feature type="glycosylation site" description="N-linked (GlcNAc...) asparagine" evidence="2">
    <location>
        <position position="203"/>
    </location>
</feature>
<feature type="sequence conflict" description="In Ref. 3; AAO42880 and 4; BAE99502." evidence="9" ref="3 4">
    <original>N</original>
    <variation>S</variation>
    <location>
        <position position="79"/>
    </location>
</feature>
<keyword id="KW-0067">ATP-binding</keyword>
<keyword id="KW-1003">Cell membrane</keyword>
<keyword id="KW-0217">Developmental protein</keyword>
<keyword id="KW-0325">Glycoprotein</keyword>
<keyword id="KW-0418">Kinase</keyword>
<keyword id="KW-0430">Lectin</keyword>
<keyword id="KW-0472">Membrane</keyword>
<keyword id="KW-0547">Nucleotide-binding</keyword>
<keyword id="KW-0611">Plant defense</keyword>
<keyword id="KW-0675">Receptor</keyword>
<keyword id="KW-1185">Reference proteome</keyword>
<keyword id="KW-0723">Serine/threonine-protein kinase</keyword>
<keyword id="KW-0732">Signal</keyword>
<keyword id="KW-0808">Transferase</keyword>
<keyword id="KW-0812">Transmembrane</keyword>
<keyword id="KW-1133">Transmembrane helix</keyword>
<reference key="1">
    <citation type="journal article" date="2000" name="Nature">
        <title>Sequence and analysis of chromosome 3 of the plant Arabidopsis thaliana.</title>
        <authorList>
            <person name="Salanoubat M."/>
            <person name="Lemcke K."/>
            <person name="Rieger M."/>
            <person name="Ansorge W."/>
            <person name="Unseld M."/>
            <person name="Fartmann B."/>
            <person name="Valle G."/>
            <person name="Bloecker H."/>
            <person name="Perez-Alonso M."/>
            <person name="Obermaier B."/>
            <person name="Delseny M."/>
            <person name="Boutry M."/>
            <person name="Grivell L.A."/>
            <person name="Mache R."/>
            <person name="Puigdomenech P."/>
            <person name="De Simone V."/>
            <person name="Choisne N."/>
            <person name="Artiguenave F."/>
            <person name="Robert C."/>
            <person name="Brottier P."/>
            <person name="Wincker P."/>
            <person name="Cattolico L."/>
            <person name="Weissenbach J."/>
            <person name="Saurin W."/>
            <person name="Quetier F."/>
            <person name="Schaefer M."/>
            <person name="Mueller-Auer S."/>
            <person name="Gabel C."/>
            <person name="Fuchs M."/>
            <person name="Benes V."/>
            <person name="Wurmbach E."/>
            <person name="Drzonek H."/>
            <person name="Erfle H."/>
            <person name="Jordan N."/>
            <person name="Bangert S."/>
            <person name="Wiedelmann R."/>
            <person name="Kranz H."/>
            <person name="Voss H."/>
            <person name="Holland R."/>
            <person name="Brandt P."/>
            <person name="Nyakatura G."/>
            <person name="Vezzi A."/>
            <person name="D'Angelo M."/>
            <person name="Pallavicini A."/>
            <person name="Toppo S."/>
            <person name="Simionati B."/>
            <person name="Conrad A."/>
            <person name="Hornischer K."/>
            <person name="Kauer G."/>
            <person name="Loehnert T.-H."/>
            <person name="Nordsiek G."/>
            <person name="Reichelt J."/>
            <person name="Scharfe M."/>
            <person name="Schoen O."/>
            <person name="Bargues M."/>
            <person name="Terol J."/>
            <person name="Climent J."/>
            <person name="Navarro P."/>
            <person name="Collado C."/>
            <person name="Perez-Perez A."/>
            <person name="Ottenwaelder B."/>
            <person name="Duchemin D."/>
            <person name="Cooke R."/>
            <person name="Laudie M."/>
            <person name="Berger-Llauro C."/>
            <person name="Purnelle B."/>
            <person name="Masuy D."/>
            <person name="de Haan M."/>
            <person name="Maarse A.C."/>
            <person name="Alcaraz J.-P."/>
            <person name="Cottet A."/>
            <person name="Casacuberta E."/>
            <person name="Monfort A."/>
            <person name="Argiriou A."/>
            <person name="Flores M."/>
            <person name="Liguori R."/>
            <person name="Vitale D."/>
            <person name="Mannhaupt G."/>
            <person name="Haase D."/>
            <person name="Schoof H."/>
            <person name="Rudd S."/>
            <person name="Zaccaria P."/>
            <person name="Mewes H.-W."/>
            <person name="Mayer K.F.X."/>
            <person name="Kaul S."/>
            <person name="Town C.D."/>
            <person name="Koo H.L."/>
            <person name="Tallon L.J."/>
            <person name="Jenkins J."/>
            <person name="Rooney T."/>
            <person name="Rizzo M."/>
            <person name="Walts A."/>
            <person name="Utterback T."/>
            <person name="Fujii C.Y."/>
            <person name="Shea T.P."/>
            <person name="Creasy T.H."/>
            <person name="Haas B."/>
            <person name="Maiti R."/>
            <person name="Wu D."/>
            <person name="Peterson J."/>
            <person name="Van Aken S."/>
            <person name="Pai G."/>
            <person name="Militscher J."/>
            <person name="Sellers P."/>
            <person name="Gill J.E."/>
            <person name="Feldblyum T.V."/>
            <person name="Preuss D."/>
            <person name="Lin X."/>
            <person name="Nierman W.C."/>
            <person name="Salzberg S.L."/>
            <person name="White O."/>
            <person name="Venter J.C."/>
            <person name="Fraser C.M."/>
            <person name="Kaneko T."/>
            <person name="Nakamura Y."/>
            <person name="Sato S."/>
            <person name="Kato T."/>
            <person name="Asamizu E."/>
            <person name="Sasamoto S."/>
            <person name="Kimura T."/>
            <person name="Idesawa K."/>
            <person name="Kawashima K."/>
            <person name="Kishida Y."/>
            <person name="Kiyokawa C."/>
            <person name="Kohara M."/>
            <person name="Matsumoto M."/>
            <person name="Matsuno A."/>
            <person name="Muraki A."/>
            <person name="Nakayama S."/>
            <person name="Nakazaki N."/>
            <person name="Shinpo S."/>
            <person name="Takeuchi C."/>
            <person name="Wada T."/>
            <person name="Watanabe A."/>
            <person name="Yamada M."/>
            <person name="Yasuda M."/>
            <person name="Tabata S."/>
        </authorList>
    </citation>
    <scope>NUCLEOTIDE SEQUENCE [LARGE SCALE GENOMIC DNA]</scope>
    <source>
        <strain>cv. Columbia</strain>
    </source>
</reference>
<reference key="2">
    <citation type="journal article" date="2017" name="Plant J.">
        <title>Araport11: a complete reannotation of the Arabidopsis thaliana reference genome.</title>
        <authorList>
            <person name="Cheng C.Y."/>
            <person name="Krishnakumar V."/>
            <person name="Chan A.P."/>
            <person name="Thibaud-Nissen F."/>
            <person name="Schobel S."/>
            <person name="Town C.D."/>
        </authorList>
    </citation>
    <scope>GENOME REANNOTATION</scope>
    <source>
        <strain>cv. Columbia</strain>
    </source>
</reference>
<reference key="3">
    <citation type="journal article" date="2003" name="Science">
        <title>Empirical analysis of transcriptional activity in the Arabidopsis genome.</title>
        <authorList>
            <person name="Yamada K."/>
            <person name="Lim J."/>
            <person name="Dale J.M."/>
            <person name="Chen H."/>
            <person name="Shinn P."/>
            <person name="Palm C.J."/>
            <person name="Southwick A.M."/>
            <person name="Wu H.C."/>
            <person name="Kim C.J."/>
            <person name="Nguyen M."/>
            <person name="Pham P.K."/>
            <person name="Cheuk R.F."/>
            <person name="Karlin-Newmann G."/>
            <person name="Liu S.X."/>
            <person name="Lam B."/>
            <person name="Sakano H."/>
            <person name="Wu T."/>
            <person name="Yu G."/>
            <person name="Miranda M."/>
            <person name="Quach H.L."/>
            <person name="Tripp M."/>
            <person name="Chang C.H."/>
            <person name="Lee J.M."/>
            <person name="Toriumi M.J."/>
            <person name="Chan M.M."/>
            <person name="Tang C.C."/>
            <person name="Onodera C.S."/>
            <person name="Deng J.M."/>
            <person name="Akiyama K."/>
            <person name="Ansari Y."/>
            <person name="Arakawa T."/>
            <person name="Banh J."/>
            <person name="Banno F."/>
            <person name="Bowser L."/>
            <person name="Brooks S.Y."/>
            <person name="Carninci P."/>
            <person name="Chao Q."/>
            <person name="Choy N."/>
            <person name="Enju A."/>
            <person name="Goldsmith A.D."/>
            <person name="Gurjal M."/>
            <person name="Hansen N.F."/>
            <person name="Hayashizaki Y."/>
            <person name="Johnson-Hopson C."/>
            <person name="Hsuan V.W."/>
            <person name="Iida K."/>
            <person name="Karnes M."/>
            <person name="Khan S."/>
            <person name="Koesema E."/>
            <person name="Ishida J."/>
            <person name="Jiang P.X."/>
            <person name="Jones T."/>
            <person name="Kawai J."/>
            <person name="Kamiya A."/>
            <person name="Meyers C."/>
            <person name="Nakajima M."/>
            <person name="Narusaka M."/>
            <person name="Seki M."/>
            <person name="Sakurai T."/>
            <person name="Satou M."/>
            <person name="Tamse R."/>
            <person name="Vaysberg M."/>
            <person name="Wallender E.K."/>
            <person name="Wong C."/>
            <person name="Yamamura Y."/>
            <person name="Yuan S."/>
            <person name="Shinozaki K."/>
            <person name="Davis R.W."/>
            <person name="Theologis A."/>
            <person name="Ecker J.R."/>
        </authorList>
    </citation>
    <scope>NUCLEOTIDE SEQUENCE [LARGE SCALE MRNA]</scope>
    <source>
        <strain>cv. Columbia</strain>
    </source>
</reference>
<reference key="4">
    <citation type="submission" date="2006-07" db="EMBL/GenBank/DDBJ databases">
        <title>Large-scale analysis of RIKEN Arabidopsis full-length (RAFL) cDNAs.</title>
        <authorList>
            <person name="Totoki Y."/>
            <person name="Seki M."/>
            <person name="Ishida J."/>
            <person name="Nakajima M."/>
            <person name="Enju A."/>
            <person name="Kamiya A."/>
            <person name="Narusaka M."/>
            <person name="Shin-i T."/>
            <person name="Nakagawa M."/>
            <person name="Sakamoto N."/>
            <person name="Oishi K."/>
            <person name="Kohara Y."/>
            <person name="Kobayashi M."/>
            <person name="Toyoda A."/>
            <person name="Sakaki Y."/>
            <person name="Sakurai T."/>
            <person name="Iida K."/>
            <person name="Akiyama K."/>
            <person name="Satou M."/>
            <person name="Toyoda T."/>
            <person name="Konagaya A."/>
            <person name="Carninci P."/>
            <person name="Kawai J."/>
            <person name="Hayashizaki Y."/>
            <person name="Shinozaki K."/>
        </authorList>
    </citation>
    <scope>NUCLEOTIDE SEQUENCE [LARGE SCALE MRNA]</scope>
    <source>
        <strain>cv. Columbia</strain>
    </source>
</reference>
<reference key="5">
    <citation type="journal article" date="1999" name="Plant Mol. Biol.">
        <title>Characterization of the Arabidopsis lecRK-a genes: members of a superfamily encoding putative receptors with an extracellular domain homologous to legume lectins.</title>
        <authorList>
            <person name="Herve C."/>
            <person name="Serres J."/>
            <person name="Dabos P."/>
            <person name="Canut H."/>
            <person name="Barre A."/>
            <person name="Rouge P."/>
            <person name="Lescure B."/>
        </authorList>
    </citation>
    <scope>GENE FAMILY</scope>
</reference>
<reference key="6">
    <citation type="journal article" date="2002" name="Crit. Rev. Plant Sci.">
        <title>Lectin receptor kinases in plants.</title>
        <authorList>
            <person name="Barre A."/>
            <person name="Herve C."/>
            <person name="Lescure B."/>
            <person name="Rouge P."/>
        </authorList>
    </citation>
    <scope>GENE FAMILY</scope>
</reference>
<reference key="7">
    <citation type="journal article" date="2008" name="Plant Mol. Biol.">
        <title>A lectin receptor-like kinase is required for pollen development in Arabidopsis.</title>
        <authorList>
            <person name="Wan J."/>
            <person name="Patel A."/>
            <person name="Mathieu M."/>
            <person name="Kim S.-Y."/>
            <person name="Xu D."/>
            <person name="Stacey G."/>
        </authorList>
    </citation>
    <scope>FUNCTION</scope>
    <scope>DISRUPTION PHENOTYPE</scope>
    <scope>DEVELOPMENTAL STAGE</scope>
</reference>
<reference key="8">
    <citation type="journal article" date="2009" name="J. Exp. Bot.">
        <title>Arabidopsis L-type lectin receptor kinases: phylogeny, classification, and expression profiles.</title>
        <authorList>
            <person name="Bouwmeester K."/>
            <person name="Govers F."/>
        </authorList>
    </citation>
    <scope>GENE FAMILY</scope>
    <scope>NOMENCLATURE</scope>
</reference>
<reference key="9">
    <citation type="journal article" date="2014" name="Mol. Plant Microbe Interact.">
        <title>Phenotypic analyses of Arabidopsis T-DNA insertion lines and expression profiling reveal that multiple L-type lectin receptor kinases are involved in plant immunity.</title>
        <authorList>
            <person name="Wang Y."/>
            <person name="Bouwmeester K."/>
            <person name="Beseh P."/>
            <person name="Shan W."/>
            <person name="Govers F."/>
        </authorList>
    </citation>
    <scope>FUNCTION</scope>
    <scope>DISRUPTION PHENOTYPE</scope>
    <source>
        <strain>cv. Columbia</strain>
    </source>
</reference>
<gene>
    <name evidence="7" type="primary">LECRK42</name>
    <name evidence="8" type="synonym">LECRKA4</name>
    <name evidence="6" type="synonym">SGC</name>
    <name evidence="10" type="ordered locus">At3g53810</name>
    <name evidence="11" type="ORF">F5K20.110</name>
</gene>
<organism>
    <name type="scientific">Arabidopsis thaliana</name>
    <name type="common">Mouse-ear cress</name>
    <dbReference type="NCBI Taxonomy" id="3702"/>
    <lineage>
        <taxon>Eukaryota</taxon>
        <taxon>Viridiplantae</taxon>
        <taxon>Streptophyta</taxon>
        <taxon>Embryophyta</taxon>
        <taxon>Tracheophyta</taxon>
        <taxon>Spermatophyta</taxon>
        <taxon>Magnoliopsida</taxon>
        <taxon>eudicotyledons</taxon>
        <taxon>Gunneridae</taxon>
        <taxon>Pentapetalae</taxon>
        <taxon>rosids</taxon>
        <taxon>malvids</taxon>
        <taxon>Brassicales</taxon>
        <taxon>Brassicaceae</taxon>
        <taxon>Camelineae</taxon>
        <taxon>Arabidopsis</taxon>
    </lineage>
</organism>
<proteinExistence type="evidence at transcript level"/>
<evidence type="ECO:0000250" key="1">
    <source>
        <dbReference type="UniProtKB" id="Q9LSR8"/>
    </source>
</evidence>
<evidence type="ECO:0000255" key="2"/>
<evidence type="ECO:0000255" key="3">
    <source>
        <dbReference type="PROSITE-ProRule" id="PRU00159"/>
    </source>
</evidence>
<evidence type="ECO:0000269" key="4">
    <source>
    </source>
</evidence>
<evidence type="ECO:0000269" key="5">
    <source>
    </source>
</evidence>
<evidence type="ECO:0000303" key="6">
    <source>
    </source>
</evidence>
<evidence type="ECO:0000303" key="7">
    <source>
    </source>
</evidence>
<evidence type="ECO:0000303" key="8">
    <source ref="6"/>
</evidence>
<evidence type="ECO:0000305" key="9"/>
<evidence type="ECO:0000312" key="10">
    <source>
        <dbReference type="Araport" id="AT3G53810"/>
    </source>
</evidence>
<evidence type="ECO:0000312" key="11">
    <source>
        <dbReference type="EMBL" id="CAB88343.1"/>
    </source>
</evidence>
<protein>
    <recommendedName>
        <fullName evidence="7">L-type lectin-domain containing receptor kinase IV.2</fullName>
        <shortName evidence="7">Arabidopsis thaliana lectin-receptor kinase a4</shortName>
        <shortName evidence="8">AthlecRK-a4</shortName>
        <shortName evidence="7">LecRK-IV.2</shortName>
        <ecNumber evidence="3">2.7.11.1</ecNumber>
    </recommendedName>
    <alternativeName>
        <fullName evidence="6">Protein SMALL, GLUED-TOGETHER, AND COLLAPSED POLLEN</fullName>
    </alternativeName>
</protein>